<evidence type="ECO:0000250" key="1"/>
<evidence type="ECO:0000255" key="2"/>
<evidence type="ECO:0000305" key="3"/>
<dbReference type="EMBL" id="AB005222">
    <property type="protein sequence ID" value="BAA25565.1"/>
    <property type="molecule type" value="Genomic_DNA"/>
</dbReference>
<dbReference type="SMR" id="O66141"/>
<dbReference type="GO" id="GO:0005886">
    <property type="term" value="C:plasma membrane"/>
    <property type="evidence" value="ECO:0007669"/>
    <property type="project" value="UniProtKB-SubCell"/>
</dbReference>
<dbReference type="GO" id="GO:0030077">
    <property type="term" value="C:plasma membrane light-harvesting complex"/>
    <property type="evidence" value="ECO:0007669"/>
    <property type="project" value="InterPro"/>
</dbReference>
<dbReference type="GO" id="GO:0042314">
    <property type="term" value="F:bacteriochlorophyll binding"/>
    <property type="evidence" value="ECO:0007669"/>
    <property type="project" value="UniProtKB-KW"/>
</dbReference>
<dbReference type="GO" id="GO:0045156">
    <property type="term" value="F:electron transporter, transferring electrons within the cyclic electron transport pathway of photosynthesis activity"/>
    <property type="evidence" value="ECO:0007669"/>
    <property type="project" value="InterPro"/>
</dbReference>
<dbReference type="GO" id="GO:0046872">
    <property type="term" value="F:metal ion binding"/>
    <property type="evidence" value="ECO:0007669"/>
    <property type="project" value="UniProtKB-KW"/>
</dbReference>
<dbReference type="GO" id="GO:0009772">
    <property type="term" value="P:photosynthetic electron transport in photosystem II"/>
    <property type="evidence" value="ECO:0007669"/>
    <property type="project" value="InterPro"/>
</dbReference>
<dbReference type="Gene3D" id="1.20.85.10">
    <property type="entry name" value="Photosystem II protein D1-like"/>
    <property type="match status" value="2"/>
</dbReference>
<dbReference type="InterPro" id="IPR036854">
    <property type="entry name" value="Photo_II_D1/D2_sf"/>
</dbReference>
<dbReference type="InterPro" id="IPR005871">
    <property type="entry name" value="Photo_RC_L"/>
</dbReference>
<dbReference type="InterPro" id="IPR000484">
    <property type="entry name" value="Photo_RC_L/M"/>
</dbReference>
<dbReference type="InterPro" id="IPR055265">
    <property type="entry name" value="Photo_RC_L/M_CS"/>
</dbReference>
<dbReference type="NCBIfam" id="TIGR01157">
    <property type="entry name" value="pufL"/>
    <property type="match status" value="1"/>
</dbReference>
<dbReference type="Pfam" id="PF00124">
    <property type="entry name" value="Photo_RC"/>
    <property type="match status" value="1"/>
</dbReference>
<dbReference type="PRINTS" id="PR00256">
    <property type="entry name" value="REACTNCENTRE"/>
</dbReference>
<dbReference type="SUPFAM" id="SSF81483">
    <property type="entry name" value="Bacterial photosystem II reaction centre, L and M subunits"/>
    <property type="match status" value="1"/>
</dbReference>
<dbReference type="PROSITE" id="PS00244">
    <property type="entry name" value="REACTION_CENTER"/>
    <property type="match status" value="1"/>
</dbReference>
<reference key="1">
    <citation type="journal article" date="1997" name="Plant Cell Physiol.">
        <title>Nucleotide sequences of genes coding for photosynthetic reaction centers and light-harvesting proteins of Acidiphilium rubrum and related aerobic acidophilic bacteria.</title>
        <authorList>
            <person name="Nagashima K.V."/>
            <person name="Matsuura K."/>
            <person name="Wakao N."/>
            <person name="Hiraishi A."/>
            <person name="Shimada K."/>
        </authorList>
    </citation>
    <scope>NUCLEOTIDE SEQUENCE [GENOMIC DNA]</scope>
</reference>
<feature type="chain" id="PRO_0000090399" description="Reaction center protein L chain">
    <location>
        <begin position="1" status="less than"/>
        <end position="254"/>
    </location>
</feature>
<feature type="transmembrane region" description="Helical" evidence="2">
    <location>
        <begin position="10"/>
        <end position="32"/>
    </location>
</feature>
<feature type="transmembrane region" description="Helical" evidence="2">
    <location>
        <begin position="60"/>
        <end position="88"/>
    </location>
</feature>
<feature type="transmembrane region" description="Helical" evidence="2">
    <location>
        <begin position="93"/>
        <end position="115"/>
    </location>
</feature>
<feature type="transmembrane region" description="Helical" evidence="2">
    <location>
        <begin position="148"/>
        <end position="175"/>
    </location>
</feature>
<feature type="transmembrane region" description="Helical" evidence="2">
    <location>
        <begin position="202"/>
        <end position="227"/>
    </location>
</feature>
<feature type="binding site" description="axial binding residue" evidence="1">
    <location>
        <position position="130"/>
    </location>
    <ligand>
        <name>(7R,8Z)-bacteriochlorophyll b</name>
        <dbReference type="ChEBI" id="CHEBI:30034"/>
    </ligand>
    <ligandPart>
        <name>Mg</name>
        <dbReference type="ChEBI" id="CHEBI:25107"/>
    </ligandPart>
</feature>
<feature type="binding site" description="axial binding residue" evidence="1">
    <location>
        <position position="150"/>
    </location>
    <ligand>
        <name>(7R,8Z)-bacteriochlorophyll b</name>
        <dbReference type="ChEBI" id="CHEBI:30034"/>
    </ligand>
    <ligandPart>
        <name>Mg</name>
        <dbReference type="ChEBI" id="CHEBI:25107"/>
    </ligandPart>
</feature>
<feature type="binding site" evidence="1">
    <location>
        <position position="167"/>
    </location>
    <ligand>
        <name>Fe cation</name>
        <dbReference type="ChEBI" id="CHEBI:24875"/>
    </ligand>
</feature>
<feature type="binding site" evidence="1">
    <location>
        <position position="193"/>
    </location>
    <ligand>
        <name>a ubiquinone</name>
        <dbReference type="ChEBI" id="CHEBI:16389"/>
    </ligand>
</feature>
<feature type="binding site" evidence="1">
    <location>
        <position position="207"/>
    </location>
    <ligand>
        <name>Fe cation</name>
        <dbReference type="ChEBI" id="CHEBI:24875"/>
    </ligand>
</feature>
<feature type="non-terminal residue">
    <location>
        <position position="1"/>
    </location>
</feature>
<gene>
    <name type="primary">pufL</name>
</gene>
<protein>
    <recommendedName>
        <fullName>Reaction center protein L chain</fullName>
    </recommendedName>
    <alternativeName>
        <fullName>Photosynthetic reaction center L subunit</fullName>
    </alternativeName>
</protein>
<proteinExistence type="inferred from homology"/>
<name>RCEL_ACIOR</name>
<keyword id="KW-0076">Bacteriochlorophyll</keyword>
<keyword id="KW-0997">Cell inner membrane</keyword>
<keyword id="KW-1003">Cell membrane</keyword>
<keyword id="KW-0148">Chlorophyll</keyword>
<keyword id="KW-0157">Chromophore</keyword>
<keyword id="KW-0249">Electron transport</keyword>
<keyword id="KW-0408">Iron</keyword>
<keyword id="KW-0460">Magnesium</keyword>
<keyword id="KW-0472">Membrane</keyword>
<keyword id="KW-0479">Metal-binding</keyword>
<keyword id="KW-0602">Photosynthesis</keyword>
<keyword id="KW-0674">Reaction center</keyword>
<keyword id="KW-0812">Transmembrane</keyword>
<keyword id="KW-1133">Transmembrane helix</keyword>
<keyword id="KW-0813">Transport</keyword>
<accession>O66141</accession>
<organism>
    <name type="scientific">Acidiphilium organovorum</name>
    <dbReference type="NCBI Taxonomy" id="33999"/>
    <lineage>
        <taxon>Bacteria</taxon>
        <taxon>Pseudomonadati</taxon>
        <taxon>Pseudomonadota</taxon>
        <taxon>Alphaproteobacteria</taxon>
        <taxon>Acetobacterales</taxon>
        <taxon>Acidocellaceae</taxon>
        <taxon>Acidiphilium</taxon>
    </lineage>
</organism>
<comment type="function">
    <text>The reaction center is a membrane-bound complex that mediates the initial photochemical event in the electron transfer process of photosynthesis.</text>
</comment>
<comment type="subunit">
    <text>Reaction center is composed of four bacteriochlorophylls, two bacteriopheophytins, two ubiquinones, one iron, and two highly hydrophobic polypeptide chains (designated L and M).</text>
</comment>
<comment type="subcellular location">
    <subcellularLocation>
        <location evidence="1">Cell inner membrane</location>
        <topology evidence="1">Multi-pass membrane protein</topology>
    </subcellularLocation>
</comment>
<comment type="similarity">
    <text evidence="3">Belongs to the reaction center PufL/M/PsbA/D family.</text>
</comment>
<sequence length="254" mass="27805">YWVGPFYVGFFGVTAAFFIMLGTALIIWGAALGPTWNIWQISIAPPDLSYGLGLAPLAKGGLWQIITVCAIGAFGSWALREVEISRKLGIGLHVPAAFSVAIFAYVTLEVIRPLLMGAWGNGFPYGIMSHLDWVSNTGYAYLNFEYNPMHMVAVTLFFTTTLALALHGSLVLAAINPPAGETVKFAEHEDTFFRDFIGYSIGTLGIHRLGLFLALGAGFASATCILLSGPFWTQGWPSWWGWWLHLPIWQFGGH</sequence>